<dbReference type="EC" id="6.1.1.20" evidence="1"/>
<dbReference type="EMBL" id="BA000031">
    <property type="protein sequence ID" value="BAC59553.1"/>
    <property type="molecule type" value="Genomic_DNA"/>
</dbReference>
<dbReference type="RefSeq" id="NP_797669.1">
    <property type="nucleotide sequence ID" value="NC_004603.1"/>
</dbReference>
<dbReference type="RefSeq" id="WP_005480737.1">
    <property type="nucleotide sequence ID" value="NC_004603.1"/>
</dbReference>
<dbReference type="SMR" id="Q87Q60"/>
<dbReference type="GeneID" id="1188795"/>
<dbReference type="KEGG" id="vpa:VP1290"/>
<dbReference type="PATRIC" id="fig|223926.6.peg.1231"/>
<dbReference type="eggNOG" id="COG0016">
    <property type="taxonomic scope" value="Bacteria"/>
</dbReference>
<dbReference type="HOGENOM" id="CLU_025086_0_1_6"/>
<dbReference type="Proteomes" id="UP000002493">
    <property type="component" value="Chromosome 1"/>
</dbReference>
<dbReference type="GO" id="GO:0005737">
    <property type="term" value="C:cytoplasm"/>
    <property type="evidence" value="ECO:0007669"/>
    <property type="project" value="UniProtKB-SubCell"/>
</dbReference>
<dbReference type="GO" id="GO:0005524">
    <property type="term" value="F:ATP binding"/>
    <property type="evidence" value="ECO:0007669"/>
    <property type="project" value="UniProtKB-UniRule"/>
</dbReference>
<dbReference type="GO" id="GO:0000287">
    <property type="term" value="F:magnesium ion binding"/>
    <property type="evidence" value="ECO:0007669"/>
    <property type="project" value="UniProtKB-UniRule"/>
</dbReference>
<dbReference type="GO" id="GO:0004826">
    <property type="term" value="F:phenylalanine-tRNA ligase activity"/>
    <property type="evidence" value="ECO:0007669"/>
    <property type="project" value="UniProtKB-UniRule"/>
</dbReference>
<dbReference type="GO" id="GO:0000049">
    <property type="term" value="F:tRNA binding"/>
    <property type="evidence" value="ECO:0007669"/>
    <property type="project" value="InterPro"/>
</dbReference>
<dbReference type="GO" id="GO:0006432">
    <property type="term" value="P:phenylalanyl-tRNA aminoacylation"/>
    <property type="evidence" value="ECO:0007669"/>
    <property type="project" value="UniProtKB-UniRule"/>
</dbReference>
<dbReference type="CDD" id="cd00496">
    <property type="entry name" value="PheRS_alpha_core"/>
    <property type="match status" value="1"/>
</dbReference>
<dbReference type="FunFam" id="3.30.930.10:FF:000003">
    <property type="entry name" value="Phenylalanine--tRNA ligase alpha subunit"/>
    <property type="match status" value="1"/>
</dbReference>
<dbReference type="Gene3D" id="3.30.930.10">
    <property type="entry name" value="Bira Bifunctional Protein, Domain 2"/>
    <property type="match status" value="1"/>
</dbReference>
<dbReference type="HAMAP" id="MF_00281">
    <property type="entry name" value="Phe_tRNA_synth_alpha1"/>
    <property type="match status" value="1"/>
</dbReference>
<dbReference type="InterPro" id="IPR006195">
    <property type="entry name" value="aa-tRNA-synth_II"/>
</dbReference>
<dbReference type="InterPro" id="IPR045864">
    <property type="entry name" value="aa-tRNA-synth_II/BPL/LPL"/>
</dbReference>
<dbReference type="InterPro" id="IPR004529">
    <property type="entry name" value="Phe-tRNA-synth_IIc_asu"/>
</dbReference>
<dbReference type="InterPro" id="IPR004188">
    <property type="entry name" value="Phe-tRNA_ligase_II_N"/>
</dbReference>
<dbReference type="InterPro" id="IPR022911">
    <property type="entry name" value="Phe_tRNA_ligase_alpha1_bac"/>
</dbReference>
<dbReference type="InterPro" id="IPR002319">
    <property type="entry name" value="Phenylalanyl-tRNA_Synthase"/>
</dbReference>
<dbReference type="InterPro" id="IPR010978">
    <property type="entry name" value="tRNA-bd_arm"/>
</dbReference>
<dbReference type="NCBIfam" id="TIGR00468">
    <property type="entry name" value="pheS"/>
    <property type="match status" value="1"/>
</dbReference>
<dbReference type="PANTHER" id="PTHR11538:SF41">
    <property type="entry name" value="PHENYLALANINE--TRNA LIGASE, MITOCHONDRIAL"/>
    <property type="match status" value="1"/>
</dbReference>
<dbReference type="PANTHER" id="PTHR11538">
    <property type="entry name" value="PHENYLALANYL-TRNA SYNTHETASE"/>
    <property type="match status" value="1"/>
</dbReference>
<dbReference type="Pfam" id="PF02912">
    <property type="entry name" value="Phe_tRNA-synt_N"/>
    <property type="match status" value="1"/>
</dbReference>
<dbReference type="Pfam" id="PF01409">
    <property type="entry name" value="tRNA-synt_2d"/>
    <property type="match status" value="1"/>
</dbReference>
<dbReference type="SUPFAM" id="SSF55681">
    <property type="entry name" value="Class II aaRS and biotin synthetases"/>
    <property type="match status" value="1"/>
</dbReference>
<dbReference type="SUPFAM" id="SSF46589">
    <property type="entry name" value="tRNA-binding arm"/>
    <property type="match status" value="1"/>
</dbReference>
<dbReference type="PROSITE" id="PS50862">
    <property type="entry name" value="AA_TRNA_LIGASE_II"/>
    <property type="match status" value="1"/>
</dbReference>
<name>SYFA_VIBPA</name>
<proteinExistence type="inferred from homology"/>
<evidence type="ECO:0000255" key="1">
    <source>
        <dbReference type="HAMAP-Rule" id="MF_00281"/>
    </source>
</evidence>
<feature type="chain" id="PRO_0000126792" description="Phenylalanine--tRNA ligase alpha subunit">
    <location>
        <begin position="1"/>
        <end position="327"/>
    </location>
</feature>
<feature type="binding site" evidence="1">
    <location>
        <position position="252"/>
    </location>
    <ligand>
        <name>Mg(2+)</name>
        <dbReference type="ChEBI" id="CHEBI:18420"/>
        <note>shared with beta subunit</note>
    </ligand>
</feature>
<comment type="catalytic activity">
    <reaction evidence="1">
        <text>tRNA(Phe) + L-phenylalanine + ATP = L-phenylalanyl-tRNA(Phe) + AMP + diphosphate + H(+)</text>
        <dbReference type="Rhea" id="RHEA:19413"/>
        <dbReference type="Rhea" id="RHEA-COMP:9668"/>
        <dbReference type="Rhea" id="RHEA-COMP:9699"/>
        <dbReference type="ChEBI" id="CHEBI:15378"/>
        <dbReference type="ChEBI" id="CHEBI:30616"/>
        <dbReference type="ChEBI" id="CHEBI:33019"/>
        <dbReference type="ChEBI" id="CHEBI:58095"/>
        <dbReference type="ChEBI" id="CHEBI:78442"/>
        <dbReference type="ChEBI" id="CHEBI:78531"/>
        <dbReference type="ChEBI" id="CHEBI:456215"/>
        <dbReference type="EC" id="6.1.1.20"/>
    </reaction>
</comment>
<comment type="cofactor">
    <cofactor evidence="1">
        <name>Mg(2+)</name>
        <dbReference type="ChEBI" id="CHEBI:18420"/>
    </cofactor>
    <text evidence="1">Binds 2 magnesium ions per tetramer.</text>
</comment>
<comment type="subunit">
    <text evidence="1">Tetramer of two alpha and two beta subunits.</text>
</comment>
<comment type="subcellular location">
    <subcellularLocation>
        <location evidence="1">Cytoplasm</location>
    </subcellularLocation>
</comment>
<comment type="similarity">
    <text evidence="1">Belongs to the class-II aminoacyl-tRNA synthetase family. Phe-tRNA synthetase alpha subunit type 1 subfamily.</text>
</comment>
<gene>
    <name evidence="1" type="primary">pheS</name>
    <name type="ordered locus">VP1290</name>
</gene>
<accession>Q87Q60</accession>
<organism>
    <name type="scientific">Vibrio parahaemolyticus serotype O3:K6 (strain RIMD 2210633)</name>
    <dbReference type="NCBI Taxonomy" id="223926"/>
    <lineage>
        <taxon>Bacteria</taxon>
        <taxon>Pseudomonadati</taxon>
        <taxon>Pseudomonadota</taxon>
        <taxon>Gammaproteobacteria</taxon>
        <taxon>Vibrionales</taxon>
        <taxon>Vibrionaceae</taxon>
        <taxon>Vibrio</taxon>
    </lineage>
</organism>
<protein>
    <recommendedName>
        <fullName evidence="1">Phenylalanine--tRNA ligase alpha subunit</fullName>
        <ecNumber evidence="1">6.1.1.20</ecNumber>
    </recommendedName>
    <alternativeName>
        <fullName evidence="1">Phenylalanyl-tRNA synthetase alpha subunit</fullName>
        <shortName evidence="1">PheRS</shortName>
    </alternativeName>
</protein>
<sequence length="327" mass="36873">MQHLEEIIASASTAIEAAESLVALDEVRVQYLGKKGELTAQLQSLGKLPPEERREAGQEINKAKGVVQQAIAARKDALQSAELEAKLAAETIDVTLPGRRIENGGLHPVTRTVERIEKFFGELGFNTEAGPEIEDAFHNFDALNIAADHPARTDHDTFFFNPDLMLRTHTSGVQIRTMENGKPPFRFIAPGRVYRNDYDQTHTPMFHQVEGMLVDENVNFAQLKGILHDFLCNFFEEEVEVRFRPSYFPFTEPSAEVDVKGKNGKWLEVLGCGMVHPNVLRSVGIDPEKYSGFAFGMGVERLTMLRYGVNDLRAFFENDLRFLKQFK</sequence>
<reference key="1">
    <citation type="journal article" date="2003" name="Lancet">
        <title>Genome sequence of Vibrio parahaemolyticus: a pathogenic mechanism distinct from that of V. cholerae.</title>
        <authorList>
            <person name="Makino K."/>
            <person name="Oshima K."/>
            <person name="Kurokawa K."/>
            <person name="Yokoyama K."/>
            <person name="Uda T."/>
            <person name="Tagomori K."/>
            <person name="Iijima Y."/>
            <person name="Najima M."/>
            <person name="Nakano M."/>
            <person name="Yamashita A."/>
            <person name="Kubota Y."/>
            <person name="Kimura S."/>
            <person name="Yasunaga T."/>
            <person name="Honda T."/>
            <person name="Shinagawa H."/>
            <person name="Hattori M."/>
            <person name="Iida T."/>
        </authorList>
    </citation>
    <scope>NUCLEOTIDE SEQUENCE [LARGE SCALE GENOMIC DNA]</scope>
    <source>
        <strain>RIMD 2210633</strain>
    </source>
</reference>
<keyword id="KW-0030">Aminoacyl-tRNA synthetase</keyword>
<keyword id="KW-0067">ATP-binding</keyword>
<keyword id="KW-0963">Cytoplasm</keyword>
<keyword id="KW-0436">Ligase</keyword>
<keyword id="KW-0460">Magnesium</keyword>
<keyword id="KW-0479">Metal-binding</keyword>
<keyword id="KW-0547">Nucleotide-binding</keyword>
<keyword id="KW-0648">Protein biosynthesis</keyword>